<organism>
    <name type="scientific">Nicotiana tabacum</name>
    <name type="common">Common tobacco</name>
    <dbReference type="NCBI Taxonomy" id="4097"/>
    <lineage>
        <taxon>Eukaryota</taxon>
        <taxon>Viridiplantae</taxon>
        <taxon>Streptophyta</taxon>
        <taxon>Embryophyta</taxon>
        <taxon>Tracheophyta</taxon>
        <taxon>Spermatophyta</taxon>
        <taxon>Magnoliopsida</taxon>
        <taxon>eudicotyledons</taxon>
        <taxon>Gunneridae</taxon>
        <taxon>Pentapetalae</taxon>
        <taxon>asterids</taxon>
        <taxon>lamiids</taxon>
        <taxon>Solanales</taxon>
        <taxon>Solanaceae</taxon>
        <taxon>Nicotianoideae</taxon>
        <taxon>Nicotianeae</taxon>
        <taxon>Nicotiana</taxon>
    </lineage>
</organism>
<feature type="signal peptide" evidence="3">
    <location>
        <begin position="1"/>
        <end position="29"/>
    </location>
</feature>
<feature type="chain" id="PRO_0000011880" description="Glucan endo-1,3-beta-glucosidase, acidic isoform GL153">
    <location>
        <begin position="30"/>
        <end position="356"/>
    </location>
</feature>
<feature type="active site" description="Proton donor" evidence="1">
    <location>
        <position position="124"/>
    </location>
</feature>
<feature type="active site" description="Nucleophile" evidence="1">
    <location>
        <position position="264"/>
    </location>
</feature>
<feature type="modified residue" description="Pyrrolidone carboxylic acid" evidence="2">
    <location>
        <position position="30"/>
    </location>
</feature>
<feature type="glycosylation site" description="N-linked (GlcNAc...) asparagine" evidence="3">
    <location>
        <position position="95"/>
    </location>
</feature>
<keyword id="KW-0325">Glycoprotein</keyword>
<keyword id="KW-0326">Glycosidase</keyword>
<keyword id="KW-0378">Hydrolase</keyword>
<keyword id="KW-0611">Plant defense</keyword>
<keyword id="KW-0873">Pyrrolidone carboxylic acid</keyword>
<keyword id="KW-1185">Reference proteome</keyword>
<keyword id="KW-0964">Secreted</keyword>
<keyword id="KW-0732">Signal</keyword>
<reference key="1">
    <citation type="journal article" date="1991" name="Plant Physiol.">
        <title>Differential regulation of beta-1,3-glucanase messenger RNAs in response to pathogen infection.</title>
        <authorList>
            <person name="Ward E.R."/>
            <person name="Payne G.B."/>
            <person name="Moyer M.B."/>
            <person name="Williams S.C."/>
            <person name="Dincher S.S."/>
            <person name="Sharkey K.C."/>
            <person name="Beck J.J."/>
            <person name="Taylor H.T."/>
            <person name="Ahl-Goy P."/>
            <person name="Meins F."/>
            <person name="Ryals J.A."/>
        </authorList>
    </citation>
    <scope>NUCLEOTIDE SEQUENCE</scope>
    <source>
        <strain>cv. Xanthi NC</strain>
        <tissue>Leaf</tissue>
    </source>
</reference>
<reference key="2">
    <citation type="submission" date="1999-04" db="EMBL/GenBank/DDBJ databases">
        <title>Isolation of a genomic DNA clone (GGL4) encoding a beta-1,3-glucanase from Nicotiana tabacum cv. Xanthi nc.</title>
        <authorList>
            <person name="Chen H.-J."/>
            <person name="Hou W.-C."/>
            <person name="Lin Y.-H."/>
        </authorList>
    </citation>
    <scope>NUCLEOTIDE SEQUENCE</scope>
    <source>
        <strain>cv. Xanthi NC</strain>
    </source>
</reference>
<sequence length="356" mass="39489">MALCIKNGFLAAALVLVGLLMCSIQMIGAQSIGVCYGKIANNLPSEQDVINLYKANGIRKMRIYYPDKNIFKALKGSNIEIILDVPNQDLEALANSSIANGWVQDNIRSHFPYVKFKYISIGNEVSPINNGQYSQFLLHAMENVYNALAASGLQDKIKVTTATYSGLLANTYPPKASIFRGEFNSFINPIIQFLAQNNLPLLANVYPYFVHISNTADVPLSYALFTQRGKNSAGYQNLFDAILDSMYFAVEKAGGPNVEIIVSESGWPSEGNSAATIENAQTYYRNLIDHVKRGAGTPKKPGKSIETYLFAMFDENVKKGEITEKHFGLFSPDQRAKYQLNFNSLMPIYIDISRVI</sequence>
<accession>P52399</accession>
<protein>
    <recommendedName>
        <fullName>Glucan endo-1,3-beta-glucosidase, acidic isoform GL153</fullName>
        <ecNumber>3.2.1.39</ecNumber>
    </recommendedName>
    <alternativeName>
        <fullName>(1-&gt;3)-beta-glucan endohydrolase</fullName>
        <shortName>(1-&gt;3)-beta-glucanase</shortName>
    </alternativeName>
    <alternativeName>
        <fullName>Beta-1,3-endoglucanase</fullName>
    </alternativeName>
</protein>
<gene>
    <name type="primary">GGL4</name>
</gene>
<comment type="function">
    <text>Is thought to be an important plant defense-related product against fungal pathogens.</text>
</comment>
<comment type="catalytic activity">
    <reaction>
        <text>Hydrolysis of (1-&gt;3)-beta-D-glucosidic linkages in (1-&gt;3)-beta-D-glucans.</text>
        <dbReference type="EC" id="3.2.1.39"/>
    </reaction>
</comment>
<comment type="subcellular location">
    <subcellularLocation>
        <location>Secreted</location>
        <location>Extracellular space</location>
    </subcellularLocation>
</comment>
<comment type="tissue specificity">
    <text>Is expressed primarily in epidermal cell of healthy plant, and following induction by ethylene, accumulates in mesophyll cells.</text>
</comment>
<comment type="induction">
    <text>By viral infection.</text>
</comment>
<comment type="similarity">
    <text evidence="4">Belongs to the glycosyl hydrolase 17 family.</text>
</comment>
<evidence type="ECO:0000250" key="1">
    <source>
        <dbReference type="UniProtKB" id="O22317"/>
    </source>
</evidence>
<evidence type="ECO:0000250" key="2">
    <source>
        <dbReference type="UniProtKB" id="P15797"/>
    </source>
</evidence>
<evidence type="ECO:0000255" key="3"/>
<evidence type="ECO:0000305" key="4"/>
<name>E13L_TOBAC</name>
<proteinExistence type="evidence at transcript level"/>
<dbReference type="EC" id="3.2.1.39"/>
<dbReference type="EMBL" id="M60463">
    <property type="protein sequence ID" value="AAA34079.1"/>
    <property type="molecule type" value="mRNA"/>
</dbReference>
<dbReference type="EMBL" id="AF141654">
    <property type="protein sequence ID" value="AAD33881.1"/>
    <property type="molecule type" value="Genomic_DNA"/>
</dbReference>
<dbReference type="PIR" id="T03249">
    <property type="entry name" value="T03249"/>
</dbReference>
<dbReference type="RefSeq" id="NP_001312401.1">
    <property type="nucleotide sequence ID" value="NM_001325472.1"/>
</dbReference>
<dbReference type="SMR" id="P52399"/>
<dbReference type="STRING" id="4097.P52399"/>
<dbReference type="CAZy" id="GH17">
    <property type="family name" value="Glycoside Hydrolase Family 17"/>
</dbReference>
<dbReference type="GlyCosmos" id="P52399">
    <property type="glycosylation" value="1 site, No reported glycans"/>
</dbReference>
<dbReference type="PaxDb" id="4097-P52399"/>
<dbReference type="GeneID" id="107789548"/>
<dbReference type="KEGG" id="nta:107789548"/>
<dbReference type="OMA" id="KPCRTHT"/>
<dbReference type="OrthoDB" id="941679at2759"/>
<dbReference type="PhylomeDB" id="P52399"/>
<dbReference type="Proteomes" id="UP000084051">
    <property type="component" value="Unplaced"/>
</dbReference>
<dbReference type="GO" id="GO:0005576">
    <property type="term" value="C:extracellular region"/>
    <property type="evidence" value="ECO:0007669"/>
    <property type="project" value="UniProtKB-SubCell"/>
</dbReference>
<dbReference type="GO" id="GO:0042973">
    <property type="term" value="F:glucan endo-1,3-beta-D-glucosidase activity"/>
    <property type="evidence" value="ECO:0007669"/>
    <property type="project" value="UniProtKB-EC"/>
</dbReference>
<dbReference type="GO" id="GO:0005975">
    <property type="term" value="P:carbohydrate metabolic process"/>
    <property type="evidence" value="ECO:0007669"/>
    <property type="project" value="InterPro"/>
</dbReference>
<dbReference type="GO" id="GO:0006952">
    <property type="term" value="P:defense response"/>
    <property type="evidence" value="ECO:0007669"/>
    <property type="project" value="UniProtKB-KW"/>
</dbReference>
<dbReference type="FunFam" id="3.20.20.80:FF:000010">
    <property type="entry name" value="glucan endo-1,3-beta-glucosidase, basic"/>
    <property type="match status" value="1"/>
</dbReference>
<dbReference type="Gene3D" id="3.20.20.80">
    <property type="entry name" value="Glycosidases"/>
    <property type="match status" value="1"/>
</dbReference>
<dbReference type="InterPro" id="IPR000490">
    <property type="entry name" value="Glyco_hydro_17"/>
</dbReference>
<dbReference type="InterPro" id="IPR044965">
    <property type="entry name" value="Glyco_hydro_17_plant"/>
</dbReference>
<dbReference type="InterPro" id="IPR017853">
    <property type="entry name" value="Glycoside_hydrolase_SF"/>
</dbReference>
<dbReference type="PANTHER" id="PTHR32227">
    <property type="entry name" value="GLUCAN ENDO-1,3-BETA-GLUCOSIDASE BG1-RELATED-RELATED"/>
    <property type="match status" value="1"/>
</dbReference>
<dbReference type="Pfam" id="PF00332">
    <property type="entry name" value="Glyco_hydro_17"/>
    <property type="match status" value="1"/>
</dbReference>
<dbReference type="SUPFAM" id="SSF51445">
    <property type="entry name" value="(Trans)glycosidases"/>
    <property type="match status" value="1"/>
</dbReference>
<dbReference type="PROSITE" id="PS00587">
    <property type="entry name" value="GLYCOSYL_HYDROL_F17"/>
    <property type="match status" value="1"/>
</dbReference>